<comment type="function">
    <text evidence="1">Catalyzes the reversible conversion of 3-phosphohydroxypyruvate to phosphoserine and of 3-hydroxy-2-oxo-4-phosphonooxybutanoate to phosphohydroxythreonine.</text>
</comment>
<comment type="catalytic activity">
    <reaction evidence="1">
        <text>O-phospho-L-serine + 2-oxoglutarate = 3-phosphooxypyruvate + L-glutamate</text>
        <dbReference type="Rhea" id="RHEA:14329"/>
        <dbReference type="ChEBI" id="CHEBI:16810"/>
        <dbReference type="ChEBI" id="CHEBI:18110"/>
        <dbReference type="ChEBI" id="CHEBI:29985"/>
        <dbReference type="ChEBI" id="CHEBI:57524"/>
        <dbReference type="EC" id="2.6.1.52"/>
    </reaction>
</comment>
<comment type="catalytic activity">
    <reaction evidence="1">
        <text>4-(phosphooxy)-L-threonine + 2-oxoglutarate = (R)-3-hydroxy-2-oxo-4-phosphooxybutanoate + L-glutamate</text>
        <dbReference type="Rhea" id="RHEA:16573"/>
        <dbReference type="ChEBI" id="CHEBI:16810"/>
        <dbReference type="ChEBI" id="CHEBI:29985"/>
        <dbReference type="ChEBI" id="CHEBI:58452"/>
        <dbReference type="ChEBI" id="CHEBI:58538"/>
        <dbReference type="EC" id="2.6.1.52"/>
    </reaction>
</comment>
<comment type="cofactor">
    <cofactor evidence="1">
        <name>pyridoxal 5'-phosphate</name>
        <dbReference type="ChEBI" id="CHEBI:597326"/>
    </cofactor>
    <text evidence="1">Binds 1 pyridoxal phosphate per subunit.</text>
</comment>
<comment type="pathway">
    <text evidence="1">Amino-acid biosynthesis; L-serine biosynthesis; L-serine from 3-phospho-D-glycerate: step 2/3.</text>
</comment>
<comment type="subunit">
    <text evidence="1">Homodimer.</text>
</comment>
<comment type="subcellular location">
    <subcellularLocation>
        <location evidence="1">Cytoplasm</location>
    </subcellularLocation>
</comment>
<comment type="similarity">
    <text evidence="1">Belongs to the class-V pyridoxal-phosphate-dependent aminotransferase family. SerC subfamily.</text>
</comment>
<evidence type="ECO:0000255" key="1">
    <source>
        <dbReference type="HAMAP-Rule" id="MF_00160"/>
    </source>
</evidence>
<dbReference type="EC" id="2.6.1.52" evidence="1"/>
<dbReference type="EMBL" id="CP000517">
    <property type="protein sequence ID" value="ABX26333.1"/>
    <property type="molecule type" value="Genomic_DNA"/>
</dbReference>
<dbReference type="RefSeq" id="WP_012211222.1">
    <property type="nucleotide sequence ID" value="NC_010080.1"/>
</dbReference>
<dbReference type="SMR" id="A8YW78"/>
<dbReference type="KEGG" id="lhe:lhv_0048"/>
<dbReference type="eggNOG" id="COG1932">
    <property type="taxonomic scope" value="Bacteria"/>
</dbReference>
<dbReference type="HOGENOM" id="CLU_034866_0_2_9"/>
<dbReference type="UniPathway" id="UPA00135">
    <property type="reaction ID" value="UER00197"/>
</dbReference>
<dbReference type="Proteomes" id="UP000000790">
    <property type="component" value="Chromosome"/>
</dbReference>
<dbReference type="GO" id="GO:0005737">
    <property type="term" value="C:cytoplasm"/>
    <property type="evidence" value="ECO:0007669"/>
    <property type="project" value="UniProtKB-SubCell"/>
</dbReference>
<dbReference type="GO" id="GO:0004648">
    <property type="term" value="F:O-phospho-L-serine:2-oxoglutarate aminotransferase activity"/>
    <property type="evidence" value="ECO:0007669"/>
    <property type="project" value="UniProtKB-UniRule"/>
</dbReference>
<dbReference type="GO" id="GO:0030170">
    <property type="term" value="F:pyridoxal phosphate binding"/>
    <property type="evidence" value="ECO:0007669"/>
    <property type="project" value="UniProtKB-UniRule"/>
</dbReference>
<dbReference type="GO" id="GO:0006564">
    <property type="term" value="P:L-serine biosynthetic process"/>
    <property type="evidence" value="ECO:0007669"/>
    <property type="project" value="UniProtKB-UniRule"/>
</dbReference>
<dbReference type="FunFam" id="3.40.640.10:FF:000010">
    <property type="entry name" value="Phosphoserine aminotransferase"/>
    <property type="match status" value="1"/>
</dbReference>
<dbReference type="FunFam" id="3.90.1150.10:FF:000006">
    <property type="entry name" value="Phosphoserine aminotransferase"/>
    <property type="match status" value="1"/>
</dbReference>
<dbReference type="Gene3D" id="3.90.1150.10">
    <property type="entry name" value="Aspartate Aminotransferase, domain 1"/>
    <property type="match status" value="1"/>
</dbReference>
<dbReference type="Gene3D" id="3.40.640.10">
    <property type="entry name" value="Type I PLP-dependent aspartate aminotransferase-like (Major domain)"/>
    <property type="match status" value="1"/>
</dbReference>
<dbReference type="HAMAP" id="MF_00160">
    <property type="entry name" value="SerC_aminotrans_5"/>
    <property type="match status" value="1"/>
</dbReference>
<dbReference type="InterPro" id="IPR000192">
    <property type="entry name" value="Aminotrans_V_dom"/>
</dbReference>
<dbReference type="InterPro" id="IPR022278">
    <property type="entry name" value="Pser_aminoTfrase"/>
</dbReference>
<dbReference type="InterPro" id="IPR015424">
    <property type="entry name" value="PyrdxlP-dep_Trfase"/>
</dbReference>
<dbReference type="InterPro" id="IPR015421">
    <property type="entry name" value="PyrdxlP-dep_Trfase_major"/>
</dbReference>
<dbReference type="InterPro" id="IPR015422">
    <property type="entry name" value="PyrdxlP-dep_Trfase_small"/>
</dbReference>
<dbReference type="NCBIfam" id="NF003764">
    <property type="entry name" value="PRK05355.1"/>
    <property type="match status" value="1"/>
</dbReference>
<dbReference type="NCBIfam" id="TIGR01364">
    <property type="entry name" value="serC_1"/>
    <property type="match status" value="1"/>
</dbReference>
<dbReference type="PANTHER" id="PTHR43247">
    <property type="entry name" value="PHOSPHOSERINE AMINOTRANSFERASE"/>
    <property type="match status" value="1"/>
</dbReference>
<dbReference type="PANTHER" id="PTHR43247:SF1">
    <property type="entry name" value="PHOSPHOSERINE AMINOTRANSFERASE"/>
    <property type="match status" value="1"/>
</dbReference>
<dbReference type="Pfam" id="PF00266">
    <property type="entry name" value="Aminotran_5"/>
    <property type="match status" value="1"/>
</dbReference>
<dbReference type="PIRSF" id="PIRSF000525">
    <property type="entry name" value="SerC"/>
    <property type="match status" value="1"/>
</dbReference>
<dbReference type="SUPFAM" id="SSF53383">
    <property type="entry name" value="PLP-dependent transferases"/>
    <property type="match status" value="1"/>
</dbReference>
<sequence>MTVYNFAAGPATLPDPVIKQIQEELPSLQGSGMSILEISHRSQMFDKIIDTAKQDIKDLMHVPDNYHILFFQGGGTGQFAAVPMNLATKHKRIALLDSGHWATRAGDEAANLGVTVDVLDSTKDKHYQELPHMPHAISASDYDYLHITTNNTIEGTAYHTLPEHGDVTLVGDLSSNFMAEEYQVSDFGLIFGGVQKNLGPAGVTVVIVRDDLVNHVDHIPSILNYELFVKKNSMFNTPPVFAIYATGLVLKWLKQQGGIAGIEALNKKKSALLYDFLDQSTLFHNDIKKTDRSLTNIPFKTTDPVLDKQVIAEADQAGLKNLKGHRSVGGLRASLYNAMPLAGVQALVDFLYNFEKQHKNNTMGKRYVSSKNI</sequence>
<proteinExistence type="inferred from homology"/>
<gene>
    <name evidence="1" type="primary">serC</name>
    <name type="ordered locus">lhv_0048</name>
</gene>
<accession>A8YW78</accession>
<feature type="chain" id="PRO_1000071543" description="Phosphoserine aminotransferase">
    <location>
        <begin position="1"/>
        <end position="373"/>
    </location>
</feature>
<feature type="binding site" evidence="1">
    <location>
        <position position="41"/>
    </location>
    <ligand>
        <name>L-glutamate</name>
        <dbReference type="ChEBI" id="CHEBI:29985"/>
    </ligand>
</feature>
<feature type="binding site" evidence="1">
    <location>
        <begin position="75"/>
        <end position="76"/>
    </location>
    <ligand>
        <name>pyridoxal 5'-phosphate</name>
        <dbReference type="ChEBI" id="CHEBI:597326"/>
    </ligand>
</feature>
<feature type="binding site" evidence="1">
    <location>
        <position position="101"/>
    </location>
    <ligand>
        <name>pyridoxal 5'-phosphate</name>
        <dbReference type="ChEBI" id="CHEBI:597326"/>
    </ligand>
</feature>
<feature type="binding site" evidence="1">
    <location>
        <position position="152"/>
    </location>
    <ligand>
        <name>pyridoxal 5'-phosphate</name>
        <dbReference type="ChEBI" id="CHEBI:597326"/>
    </ligand>
</feature>
<feature type="binding site" evidence="1">
    <location>
        <position position="172"/>
    </location>
    <ligand>
        <name>pyridoxal 5'-phosphate</name>
        <dbReference type="ChEBI" id="CHEBI:597326"/>
    </ligand>
</feature>
<feature type="binding site" evidence="1">
    <location>
        <position position="195"/>
    </location>
    <ligand>
        <name>pyridoxal 5'-phosphate</name>
        <dbReference type="ChEBI" id="CHEBI:597326"/>
    </ligand>
</feature>
<feature type="binding site" evidence="1">
    <location>
        <begin position="236"/>
        <end position="237"/>
    </location>
    <ligand>
        <name>pyridoxal 5'-phosphate</name>
        <dbReference type="ChEBI" id="CHEBI:597326"/>
    </ligand>
</feature>
<feature type="modified residue" description="N6-(pyridoxal phosphate)lysine" evidence="1">
    <location>
        <position position="196"/>
    </location>
</feature>
<reference key="1">
    <citation type="journal article" date="2008" name="J. Bacteriol.">
        <title>Genome sequence of Lactobacillus helveticus: an organism distinguished by selective gene loss and IS element expansion.</title>
        <authorList>
            <person name="Callanan M."/>
            <person name="Kaleta P."/>
            <person name="O'Callaghan J."/>
            <person name="O'Sullivan O."/>
            <person name="Jordan K."/>
            <person name="McAuliffe O."/>
            <person name="Sangrador-Vegas A."/>
            <person name="Slattery L."/>
            <person name="Fitzgerald G.F."/>
            <person name="Beresford T."/>
            <person name="Ross R.P."/>
        </authorList>
    </citation>
    <scope>NUCLEOTIDE SEQUENCE [LARGE SCALE GENOMIC DNA]</scope>
    <source>
        <strain>DPC 4571</strain>
    </source>
</reference>
<keyword id="KW-0028">Amino-acid biosynthesis</keyword>
<keyword id="KW-0032">Aminotransferase</keyword>
<keyword id="KW-0963">Cytoplasm</keyword>
<keyword id="KW-0663">Pyridoxal phosphate</keyword>
<keyword id="KW-0718">Serine biosynthesis</keyword>
<keyword id="KW-0808">Transferase</keyword>
<protein>
    <recommendedName>
        <fullName evidence="1">Phosphoserine aminotransferase</fullName>
        <ecNumber evidence="1">2.6.1.52</ecNumber>
    </recommendedName>
    <alternativeName>
        <fullName evidence="1">Phosphohydroxythreonine aminotransferase</fullName>
        <shortName evidence="1">PSAT</shortName>
    </alternativeName>
</protein>
<name>SERC_LACH4</name>
<organism>
    <name type="scientific">Lactobacillus helveticus (strain DPC 4571)</name>
    <dbReference type="NCBI Taxonomy" id="405566"/>
    <lineage>
        <taxon>Bacteria</taxon>
        <taxon>Bacillati</taxon>
        <taxon>Bacillota</taxon>
        <taxon>Bacilli</taxon>
        <taxon>Lactobacillales</taxon>
        <taxon>Lactobacillaceae</taxon>
        <taxon>Lactobacillus</taxon>
    </lineage>
</organism>